<organism>
    <name type="scientific">Mannheimia succiniciproducens (strain KCTC 0769BP / MBEL55E)</name>
    <dbReference type="NCBI Taxonomy" id="221988"/>
    <lineage>
        <taxon>Bacteria</taxon>
        <taxon>Pseudomonadati</taxon>
        <taxon>Pseudomonadota</taxon>
        <taxon>Gammaproteobacteria</taxon>
        <taxon>Pasteurellales</taxon>
        <taxon>Pasteurellaceae</taxon>
        <taxon>Basfia</taxon>
    </lineage>
</organism>
<keyword id="KW-0997">Cell inner membrane</keyword>
<keyword id="KW-1003">Cell membrane</keyword>
<keyword id="KW-0472">Membrane</keyword>
<keyword id="KW-0812">Transmembrane</keyword>
<keyword id="KW-1133">Transmembrane helix</keyword>
<protein>
    <recommendedName>
        <fullName evidence="1">Inner membrane-spanning protein YciB</fullName>
    </recommendedName>
</protein>
<name>YCIB_MANSM</name>
<gene>
    <name evidence="1" type="primary">yciB</name>
    <name type="ordered locus">MS0737</name>
</gene>
<proteinExistence type="inferred from homology"/>
<sequence length="180" mass="20994">MKQLLEFIPLILFFVVYKLAGIREAAIALIIATIFQMLILKLKYGKIEKQQIIMGIAVVFFGTLTAYFNKVEYLQWKVTIVYALFALILLISQYGFKKPLIEKLLGKEIQLPEKIWNKLNLAWAGFFILCMLINIYISQYCSEEVWVDFKSFGIIAMTFIATLFTGIYVYRYLPKDDQNK</sequence>
<accession>Q65UL6</accession>
<evidence type="ECO:0000255" key="1">
    <source>
        <dbReference type="HAMAP-Rule" id="MF_00189"/>
    </source>
</evidence>
<reference key="1">
    <citation type="journal article" date="2004" name="Nat. Biotechnol.">
        <title>The genome sequence of the capnophilic rumen bacterium Mannheimia succiniciproducens.</title>
        <authorList>
            <person name="Hong S.H."/>
            <person name="Kim J.S."/>
            <person name="Lee S.Y."/>
            <person name="In Y.H."/>
            <person name="Choi S.S."/>
            <person name="Rih J.-K."/>
            <person name="Kim C.H."/>
            <person name="Jeong H."/>
            <person name="Hur C.G."/>
            <person name="Kim J.J."/>
        </authorList>
    </citation>
    <scope>NUCLEOTIDE SEQUENCE [LARGE SCALE GENOMIC DNA]</scope>
    <source>
        <strain>KCTC 0769BP / MBEL55E</strain>
    </source>
</reference>
<dbReference type="EMBL" id="AE016827">
    <property type="protein sequence ID" value="AAU37344.1"/>
    <property type="molecule type" value="Genomic_DNA"/>
</dbReference>
<dbReference type="RefSeq" id="WP_011199916.1">
    <property type="nucleotide sequence ID" value="NC_006300.1"/>
</dbReference>
<dbReference type="STRING" id="221988.MS0737"/>
<dbReference type="KEGG" id="msu:MS0737"/>
<dbReference type="eggNOG" id="COG2917">
    <property type="taxonomic scope" value="Bacteria"/>
</dbReference>
<dbReference type="HOGENOM" id="CLU_089554_2_0_6"/>
<dbReference type="OrthoDB" id="9788219at2"/>
<dbReference type="Proteomes" id="UP000000607">
    <property type="component" value="Chromosome"/>
</dbReference>
<dbReference type="GO" id="GO:0005886">
    <property type="term" value="C:plasma membrane"/>
    <property type="evidence" value="ECO:0007669"/>
    <property type="project" value="UniProtKB-SubCell"/>
</dbReference>
<dbReference type="HAMAP" id="MF_00189">
    <property type="entry name" value="YciB"/>
    <property type="match status" value="1"/>
</dbReference>
<dbReference type="InterPro" id="IPR006008">
    <property type="entry name" value="YciB"/>
</dbReference>
<dbReference type="NCBIfam" id="TIGR00997">
    <property type="entry name" value="ispZ"/>
    <property type="match status" value="1"/>
</dbReference>
<dbReference type="NCBIfam" id="NF001324">
    <property type="entry name" value="PRK00259.1-2"/>
    <property type="match status" value="1"/>
</dbReference>
<dbReference type="PANTHER" id="PTHR36917:SF1">
    <property type="entry name" value="INNER MEMBRANE-SPANNING PROTEIN YCIB"/>
    <property type="match status" value="1"/>
</dbReference>
<dbReference type="PANTHER" id="PTHR36917">
    <property type="entry name" value="INTRACELLULAR SEPTATION PROTEIN A-RELATED"/>
    <property type="match status" value="1"/>
</dbReference>
<dbReference type="Pfam" id="PF04279">
    <property type="entry name" value="IspA"/>
    <property type="match status" value="1"/>
</dbReference>
<feature type="chain" id="PRO_1000021028" description="Inner membrane-spanning protein YciB">
    <location>
        <begin position="1"/>
        <end position="180"/>
    </location>
</feature>
<feature type="transmembrane region" description="Helical" evidence="1">
    <location>
        <begin position="11"/>
        <end position="31"/>
    </location>
</feature>
<feature type="transmembrane region" description="Helical" evidence="1">
    <location>
        <begin position="52"/>
        <end position="72"/>
    </location>
</feature>
<feature type="transmembrane region" description="Helical" evidence="1">
    <location>
        <begin position="76"/>
        <end position="96"/>
    </location>
</feature>
<feature type="transmembrane region" description="Helical" evidence="1">
    <location>
        <begin position="121"/>
        <end position="141"/>
    </location>
</feature>
<feature type="transmembrane region" description="Helical" evidence="1">
    <location>
        <begin position="149"/>
        <end position="169"/>
    </location>
</feature>
<comment type="function">
    <text evidence="1">Plays a role in cell envelope biogenesis, maintenance of cell envelope integrity and membrane homeostasis.</text>
</comment>
<comment type="subcellular location">
    <subcellularLocation>
        <location evidence="1">Cell inner membrane</location>
        <topology evidence="1">Multi-pass membrane protein</topology>
    </subcellularLocation>
</comment>
<comment type="similarity">
    <text evidence="1">Belongs to the YciB family.</text>
</comment>